<protein>
    <recommendedName>
        <fullName evidence="1">Large ribosomal subunit protein uL2</fullName>
    </recommendedName>
    <alternativeName>
        <fullName evidence="3">50S ribosomal protein L2</fullName>
    </alternativeName>
</protein>
<evidence type="ECO:0000255" key="1">
    <source>
        <dbReference type="HAMAP-Rule" id="MF_01320"/>
    </source>
</evidence>
<evidence type="ECO:0000256" key="2">
    <source>
        <dbReference type="SAM" id="MobiDB-lite"/>
    </source>
</evidence>
<evidence type="ECO:0000305" key="3"/>
<comment type="function">
    <text evidence="1">One of the primary rRNA binding proteins. Required for association of the 30S and 50S subunits to form the 70S ribosome, for tRNA binding and peptide bond formation. It has been suggested to have peptidyltransferase activity; this is somewhat controversial. Makes several contacts with the 16S rRNA in the 70S ribosome.</text>
</comment>
<comment type="subunit">
    <text evidence="1">Part of the 50S ribosomal subunit. Forms a bridge to the 30S subunit in the 70S ribosome.</text>
</comment>
<comment type="similarity">
    <text evidence="1">Belongs to the universal ribosomal protein uL2 family.</text>
</comment>
<organism>
    <name type="scientific">Helicobacter pylori (strain HPAG1)</name>
    <dbReference type="NCBI Taxonomy" id="357544"/>
    <lineage>
        <taxon>Bacteria</taxon>
        <taxon>Pseudomonadati</taxon>
        <taxon>Campylobacterota</taxon>
        <taxon>Epsilonproteobacteria</taxon>
        <taxon>Campylobacterales</taxon>
        <taxon>Helicobacteraceae</taxon>
        <taxon>Helicobacter</taxon>
    </lineage>
</organism>
<reference key="1">
    <citation type="journal article" date="2006" name="Proc. Natl. Acad. Sci. U.S.A.">
        <title>The complete genome sequence of a chronic atrophic gastritis Helicobacter pylori strain: evolution during disease progression.</title>
        <authorList>
            <person name="Oh J.D."/>
            <person name="Kling-Baeckhed H."/>
            <person name="Giannakis M."/>
            <person name="Xu J."/>
            <person name="Fulton R.S."/>
            <person name="Fulton L.A."/>
            <person name="Cordum H.S."/>
            <person name="Wang C."/>
            <person name="Elliott G."/>
            <person name="Edwards J."/>
            <person name="Mardis E.R."/>
            <person name="Engstrand L.G."/>
            <person name="Gordon J.I."/>
        </authorList>
    </citation>
    <scope>NUCLEOTIDE SEQUENCE [LARGE SCALE GENOMIC DNA]</scope>
    <source>
        <strain>HPAG1</strain>
    </source>
</reference>
<proteinExistence type="inferred from homology"/>
<name>RL2_HELPH</name>
<accession>Q1CRU4</accession>
<keyword id="KW-0687">Ribonucleoprotein</keyword>
<keyword id="KW-0689">Ribosomal protein</keyword>
<keyword id="KW-0694">RNA-binding</keyword>
<keyword id="KW-0699">rRNA-binding</keyword>
<sequence length="276" mass="30271">MAIKTYKPYTPSRRFMSVLDSKDITAKSSVKGLLTKLKATAGRNNNGRITSRHKERGAKKLYRIIDFKRNKYNIEGKVAAIEYDPYRNARIALVVYPDGDKRYILQPSGLKVGDSVIAAEGGLDIKVGFAMKLKNIPIGTVVHNIEMHPGAGGQLARSAGMSAQIMGRENKYTIIRMPSSEMRYILSECMASVGVVGNEDFINVSIGKAGRNRHRGIRPQTRGSAMNPVDHPHGGGEGKTGTSGHPVSPWGTPAKGYKTRKKKASDKLIISRKKHK</sequence>
<gene>
    <name evidence="1" type="primary">rplB</name>
    <name type="ordered locus">HPAG1_1261</name>
</gene>
<dbReference type="EMBL" id="CP000241">
    <property type="protein sequence ID" value="ABF85328.1"/>
    <property type="molecule type" value="Genomic_DNA"/>
</dbReference>
<dbReference type="RefSeq" id="WP_000985807.1">
    <property type="nucleotide sequence ID" value="NC_008086.1"/>
</dbReference>
<dbReference type="SMR" id="Q1CRU4"/>
<dbReference type="KEGG" id="hpa:HPAG1_1261"/>
<dbReference type="HOGENOM" id="CLU_036235_2_1_7"/>
<dbReference type="GO" id="GO:0015934">
    <property type="term" value="C:large ribosomal subunit"/>
    <property type="evidence" value="ECO:0007669"/>
    <property type="project" value="InterPro"/>
</dbReference>
<dbReference type="GO" id="GO:0019843">
    <property type="term" value="F:rRNA binding"/>
    <property type="evidence" value="ECO:0007669"/>
    <property type="project" value="UniProtKB-UniRule"/>
</dbReference>
<dbReference type="GO" id="GO:0003735">
    <property type="term" value="F:structural constituent of ribosome"/>
    <property type="evidence" value="ECO:0007669"/>
    <property type="project" value="InterPro"/>
</dbReference>
<dbReference type="GO" id="GO:0016740">
    <property type="term" value="F:transferase activity"/>
    <property type="evidence" value="ECO:0007669"/>
    <property type="project" value="InterPro"/>
</dbReference>
<dbReference type="GO" id="GO:0002181">
    <property type="term" value="P:cytoplasmic translation"/>
    <property type="evidence" value="ECO:0007669"/>
    <property type="project" value="TreeGrafter"/>
</dbReference>
<dbReference type="FunFam" id="2.30.30.30:FF:000001">
    <property type="entry name" value="50S ribosomal protein L2"/>
    <property type="match status" value="1"/>
</dbReference>
<dbReference type="FunFam" id="2.40.50.140:FF:000003">
    <property type="entry name" value="50S ribosomal protein L2"/>
    <property type="match status" value="1"/>
</dbReference>
<dbReference type="FunFam" id="4.10.950.10:FF:000001">
    <property type="entry name" value="50S ribosomal protein L2"/>
    <property type="match status" value="1"/>
</dbReference>
<dbReference type="Gene3D" id="2.30.30.30">
    <property type="match status" value="1"/>
</dbReference>
<dbReference type="Gene3D" id="2.40.50.140">
    <property type="entry name" value="Nucleic acid-binding proteins"/>
    <property type="match status" value="1"/>
</dbReference>
<dbReference type="Gene3D" id="4.10.950.10">
    <property type="entry name" value="Ribosomal protein L2, domain 3"/>
    <property type="match status" value="1"/>
</dbReference>
<dbReference type="HAMAP" id="MF_01320_B">
    <property type="entry name" value="Ribosomal_uL2_B"/>
    <property type="match status" value="1"/>
</dbReference>
<dbReference type="InterPro" id="IPR012340">
    <property type="entry name" value="NA-bd_OB-fold"/>
</dbReference>
<dbReference type="InterPro" id="IPR014722">
    <property type="entry name" value="Rib_uL2_dom2"/>
</dbReference>
<dbReference type="InterPro" id="IPR002171">
    <property type="entry name" value="Ribosomal_uL2"/>
</dbReference>
<dbReference type="InterPro" id="IPR005880">
    <property type="entry name" value="Ribosomal_uL2_bac/org-type"/>
</dbReference>
<dbReference type="InterPro" id="IPR022669">
    <property type="entry name" value="Ribosomal_uL2_C"/>
</dbReference>
<dbReference type="InterPro" id="IPR022671">
    <property type="entry name" value="Ribosomal_uL2_CS"/>
</dbReference>
<dbReference type="InterPro" id="IPR014726">
    <property type="entry name" value="Ribosomal_uL2_dom3"/>
</dbReference>
<dbReference type="InterPro" id="IPR022666">
    <property type="entry name" value="Ribosomal_uL2_RNA-bd_dom"/>
</dbReference>
<dbReference type="InterPro" id="IPR008991">
    <property type="entry name" value="Translation_prot_SH3-like_sf"/>
</dbReference>
<dbReference type="NCBIfam" id="TIGR01171">
    <property type="entry name" value="rplB_bact"/>
    <property type="match status" value="1"/>
</dbReference>
<dbReference type="PANTHER" id="PTHR13691:SF5">
    <property type="entry name" value="LARGE RIBOSOMAL SUBUNIT PROTEIN UL2M"/>
    <property type="match status" value="1"/>
</dbReference>
<dbReference type="PANTHER" id="PTHR13691">
    <property type="entry name" value="RIBOSOMAL PROTEIN L2"/>
    <property type="match status" value="1"/>
</dbReference>
<dbReference type="Pfam" id="PF00181">
    <property type="entry name" value="Ribosomal_L2"/>
    <property type="match status" value="1"/>
</dbReference>
<dbReference type="Pfam" id="PF03947">
    <property type="entry name" value="Ribosomal_L2_C"/>
    <property type="match status" value="1"/>
</dbReference>
<dbReference type="PIRSF" id="PIRSF002158">
    <property type="entry name" value="Ribosomal_L2"/>
    <property type="match status" value="1"/>
</dbReference>
<dbReference type="SMART" id="SM01383">
    <property type="entry name" value="Ribosomal_L2"/>
    <property type="match status" value="1"/>
</dbReference>
<dbReference type="SMART" id="SM01382">
    <property type="entry name" value="Ribosomal_L2_C"/>
    <property type="match status" value="1"/>
</dbReference>
<dbReference type="SUPFAM" id="SSF50249">
    <property type="entry name" value="Nucleic acid-binding proteins"/>
    <property type="match status" value="1"/>
</dbReference>
<dbReference type="SUPFAM" id="SSF50104">
    <property type="entry name" value="Translation proteins SH3-like domain"/>
    <property type="match status" value="1"/>
</dbReference>
<dbReference type="PROSITE" id="PS00467">
    <property type="entry name" value="RIBOSOMAL_L2"/>
    <property type="match status" value="1"/>
</dbReference>
<feature type="chain" id="PRO_0000309931" description="Large ribosomal subunit protein uL2">
    <location>
        <begin position="1"/>
        <end position="276"/>
    </location>
</feature>
<feature type="region of interest" description="Disordered" evidence="2">
    <location>
        <begin position="212"/>
        <end position="276"/>
    </location>
</feature>
<feature type="compositionally biased region" description="Basic residues" evidence="2">
    <location>
        <begin position="257"/>
        <end position="276"/>
    </location>
</feature>